<keyword id="KW-0002">3D-structure</keyword>
<keyword id="KW-0150">Chloroplast</keyword>
<keyword id="KW-0472">Membrane</keyword>
<keyword id="KW-0520">NAD</keyword>
<keyword id="KW-0521">NADP</keyword>
<keyword id="KW-0934">Plastid</keyword>
<keyword id="KW-0618">Plastoquinone</keyword>
<keyword id="KW-0874">Quinone</keyword>
<keyword id="KW-0793">Thylakoid</keyword>
<keyword id="KW-1278">Translocase</keyword>
<keyword id="KW-0812">Transmembrane</keyword>
<keyword id="KW-1133">Transmembrane helix</keyword>
<keyword id="KW-0813">Transport</keyword>
<evidence type="ECO:0000255" key="1">
    <source>
        <dbReference type="HAMAP-Rule" id="MF_01456"/>
    </source>
</evidence>
<feature type="chain" id="PRO_0000118506" description="NAD(P)H-quinone oxidoreductase subunit 4L, chloroplastic">
    <location>
        <begin position="1"/>
        <end position="101"/>
    </location>
</feature>
<feature type="transmembrane region" description="Helical" evidence="1">
    <location>
        <begin position="2"/>
        <end position="22"/>
    </location>
</feature>
<feature type="transmembrane region" description="Helical" evidence="1">
    <location>
        <begin position="32"/>
        <end position="52"/>
    </location>
</feature>
<feature type="transmembrane region" description="Helical" evidence="1">
    <location>
        <begin position="61"/>
        <end position="81"/>
    </location>
</feature>
<gene>
    <name evidence="1" type="primary">ndhE</name>
    <name type="synonym">ndh4L</name>
</gene>
<geneLocation type="chloroplast"/>
<organism>
    <name type="scientific">Hordeum vulgare</name>
    <name type="common">Barley</name>
    <dbReference type="NCBI Taxonomy" id="4513"/>
    <lineage>
        <taxon>Eukaryota</taxon>
        <taxon>Viridiplantae</taxon>
        <taxon>Streptophyta</taxon>
        <taxon>Embryophyta</taxon>
        <taxon>Tracheophyta</taxon>
        <taxon>Spermatophyta</taxon>
        <taxon>Magnoliopsida</taxon>
        <taxon>Liliopsida</taxon>
        <taxon>Poales</taxon>
        <taxon>Poaceae</taxon>
        <taxon>BOP clade</taxon>
        <taxon>Pooideae</taxon>
        <taxon>Triticodae</taxon>
        <taxon>Triticeae</taxon>
        <taxon>Hordeinae</taxon>
        <taxon>Hordeum</taxon>
    </lineage>
</organism>
<name>NU4LC_HORVU</name>
<dbReference type="EC" id="7.1.1.-" evidence="1"/>
<dbReference type="EMBL" id="AJ011848">
    <property type="protein sequence ID" value="CAA09815.1"/>
    <property type="molecule type" value="Genomic_DNA"/>
</dbReference>
<dbReference type="EMBL" id="EF115541">
    <property type="protein sequence ID" value="ABK79464.1"/>
    <property type="molecule type" value="Genomic_DNA"/>
</dbReference>
<dbReference type="RefSeq" id="YP_874704.1">
    <property type="nucleotide sequence ID" value="NC_008590.1"/>
</dbReference>
<dbReference type="PDB" id="7EU3">
    <property type="method" value="EM"/>
    <property type="resolution" value="3.70 A"/>
    <property type="chains" value="E=1-100"/>
</dbReference>
<dbReference type="PDBsum" id="7EU3"/>
<dbReference type="SMR" id="P69378"/>
<dbReference type="GeneID" id="4525169"/>
<dbReference type="GO" id="GO:0009535">
    <property type="term" value="C:chloroplast thylakoid membrane"/>
    <property type="evidence" value="ECO:0007669"/>
    <property type="project" value="UniProtKB-SubCell"/>
</dbReference>
<dbReference type="GO" id="GO:0030964">
    <property type="term" value="C:NADH dehydrogenase complex"/>
    <property type="evidence" value="ECO:0007669"/>
    <property type="project" value="TreeGrafter"/>
</dbReference>
<dbReference type="GO" id="GO:0016655">
    <property type="term" value="F:oxidoreductase activity, acting on NAD(P)H, quinone or similar compound as acceptor"/>
    <property type="evidence" value="ECO:0007669"/>
    <property type="project" value="UniProtKB-UniRule"/>
</dbReference>
<dbReference type="GO" id="GO:0048038">
    <property type="term" value="F:quinone binding"/>
    <property type="evidence" value="ECO:0007669"/>
    <property type="project" value="UniProtKB-KW"/>
</dbReference>
<dbReference type="GO" id="GO:0042773">
    <property type="term" value="P:ATP synthesis coupled electron transport"/>
    <property type="evidence" value="ECO:0007669"/>
    <property type="project" value="InterPro"/>
</dbReference>
<dbReference type="GO" id="GO:0019684">
    <property type="term" value="P:photosynthesis, light reaction"/>
    <property type="evidence" value="ECO:0007669"/>
    <property type="project" value="UniProtKB-UniRule"/>
</dbReference>
<dbReference type="FunFam" id="1.10.287.3510:FF:000001">
    <property type="entry name" value="NADH-quinone oxidoreductase subunit K"/>
    <property type="match status" value="1"/>
</dbReference>
<dbReference type="Gene3D" id="1.10.287.3510">
    <property type="match status" value="1"/>
</dbReference>
<dbReference type="HAMAP" id="MF_01456">
    <property type="entry name" value="NDH1_NuoK"/>
    <property type="match status" value="1"/>
</dbReference>
<dbReference type="InterPro" id="IPR001133">
    <property type="entry name" value="NADH_UbQ_OxRdtase_chain4L/K"/>
</dbReference>
<dbReference type="InterPro" id="IPR039428">
    <property type="entry name" value="NUOK/Mnh_C1-like"/>
</dbReference>
<dbReference type="NCBIfam" id="NF004320">
    <property type="entry name" value="PRK05715.1-2"/>
    <property type="match status" value="1"/>
</dbReference>
<dbReference type="PANTHER" id="PTHR11434:SF16">
    <property type="entry name" value="NADH-UBIQUINONE OXIDOREDUCTASE CHAIN 4L"/>
    <property type="match status" value="1"/>
</dbReference>
<dbReference type="PANTHER" id="PTHR11434">
    <property type="entry name" value="NADH-UBIQUINONE OXIDOREDUCTASE SUBUNIT ND4L"/>
    <property type="match status" value="1"/>
</dbReference>
<dbReference type="Pfam" id="PF00420">
    <property type="entry name" value="Oxidored_q2"/>
    <property type="match status" value="1"/>
</dbReference>
<reference key="1">
    <citation type="journal article" date="2000" name="Nucleic Acids Res.">
        <title>Transcripts of the ndhH-D operon of barley plastids: possible role of unedited site III in splicing of the ndhA intron.</title>
        <authorList>
            <person name="del Campo E.M."/>
            <person name="Sabater B."/>
            <person name="Martin M."/>
        </authorList>
    </citation>
    <scope>NUCLEOTIDE SEQUENCE [GENOMIC DNA]</scope>
    <source>
        <strain>cv. Hassan</strain>
        <tissue>Leaf</tissue>
    </source>
</reference>
<reference key="2">
    <citation type="journal article" date="2007" name="Theor. Appl. Genet.">
        <title>Complete chloroplast genome sequences of Hordeum vulgare, Sorghum bicolor and Agrostis stolonifera, and comparative analyses with other grass genomes.</title>
        <authorList>
            <person name="Saski C."/>
            <person name="Lee S.-B."/>
            <person name="Fjellheim S."/>
            <person name="Guda C."/>
            <person name="Jansen R.K."/>
            <person name="Luo H."/>
            <person name="Tomkins J."/>
            <person name="Rognli O.A."/>
            <person name="Daniell H."/>
            <person name="Clarke J.L."/>
        </authorList>
    </citation>
    <scope>NUCLEOTIDE SEQUENCE [LARGE SCALE GENOMIC DNA]</scope>
    <source>
        <strain>cv. Morex</strain>
    </source>
</reference>
<proteinExistence type="evidence at protein level"/>
<sequence length="101" mass="11303">MMFEHVLFLSVYLFSIGIYGLITSRNMVRALICLELILNSINLNLVTFSDLFDSRQLKGDIFAIFVIALAAAEAAIGLSILSSIHRNRKSTRINQSNLLNN</sequence>
<accession>P69378</accession>
<accession>A1E9P2</accession>
<accession>O98694</accession>
<protein>
    <recommendedName>
        <fullName evidence="1">NAD(P)H-quinone oxidoreductase subunit 4L, chloroplastic</fullName>
        <ecNumber evidence="1">7.1.1.-</ecNumber>
    </recommendedName>
    <alternativeName>
        <fullName evidence="1">NAD(P)H dehydrogenase subunit 4L</fullName>
    </alternativeName>
    <alternativeName>
        <fullName evidence="1">NADH-plastoquinone oxidoreductase subunit 4L</fullName>
    </alternativeName>
</protein>
<comment type="function">
    <text evidence="1">NDH shuttles electrons from NAD(P)H:plastoquinone, via FMN and iron-sulfur (Fe-S) centers, to quinones in the photosynthetic chain and possibly in a chloroplast respiratory chain. The immediate electron acceptor for the enzyme in this species is believed to be plastoquinone. Couples the redox reaction to proton translocation, and thus conserves the redox energy in a proton gradient.</text>
</comment>
<comment type="catalytic activity">
    <reaction evidence="1">
        <text>a plastoquinone + NADH + (n+1) H(+)(in) = a plastoquinol + NAD(+) + n H(+)(out)</text>
        <dbReference type="Rhea" id="RHEA:42608"/>
        <dbReference type="Rhea" id="RHEA-COMP:9561"/>
        <dbReference type="Rhea" id="RHEA-COMP:9562"/>
        <dbReference type="ChEBI" id="CHEBI:15378"/>
        <dbReference type="ChEBI" id="CHEBI:17757"/>
        <dbReference type="ChEBI" id="CHEBI:57540"/>
        <dbReference type="ChEBI" id="CHEBI:57945"/>
        <dbReference type="ChEBI" id="CHEBI:62192"/>
    </reaction>
</comment>
<comment type="catalytic activity">
    <reaction evidence="1">
        <text>a plastoquinone + NADPH + (n+1) H(+)(in) = a plastoquinol + NADP(+) + n H(+)(out)</text>
        <dbReference type="Rhea" id="RHEA:42612"/>
        <dbReference type="Rhea" id="RHEA-COMP:9561"/>
        <dbReference type="Rhea" id="RHEA-COMP:9562"/>
        <dbReference type="ChEBI" id="CHEBI:15378"/>
        <dbReference type="ChEBI" id="CHEBI:17757"/>
        <dbReference type="ChEBI" id="CHEBI:57783"/>
        <dbReference type="ChEBI" id="CHEBI:58349"/>
        <dbReference type="ChEBI" id="CHEBI:62192"/>
    </reaction>
</comment>
<comment type="subunit">
    <text evidence="1">NDH is composed of at least 16 different subunits, 5 of which are encoded in the nucleus.</text>
</comment>
<comment type="subcellular location">
    <subcellularLocation>
        <location evidence="1">Plastid</location>
        <location evidence="1">Chloroplast thylakoid membrane</location>
        <topology evidence="1">Multi-pass membrane protein</topology>
    </subcellularLocation>
</comment>
<comment type="similarity">
    <text evidence="1">Belongs to the complex I subunit 4L family.</text>
</comment>